<feature type="chain" id="PRO_1000129506" description="2-isopropylmalate synthase">
    <location>
        <begin position="1"/>
        <end position="584"/>
    </location>
</feature>
<feature type="domain" description="Pyruvate carboxyltransferase" evidence="1">
    <location>
        <begin position="40"/>
        <end position="314"/>
    </location>
</feature>
<feature type="region of interest" description="Regulatory domain" evidence="1">
    <location>
        <begin position="456"/>
        <end position="584"/>
    </location>
</feature>
<feature type="binding site" evidence="1">
    <location>
        <position position="49"/>
    </location>
    <ligand>
        <name>Mg(2+)</name>
        <dbReference type="ChEBI" id="CHEBI:18420"/>
    </ligand>
</feature>
<feature type="binding site" evidence="1">
    <location>
        <position position="253"/>
    </location>
    <ligand>
        <name>Mg(2+)</name>
        <dbReference type="ChEBI" id="CHEBI:18420"/>
    </ligand>
</feature>
<feature type="binding site" evidence="1">
    <location>
        <position position="255"/>
    </location>
    <ligand>
        <name>Mg(2+)</name>
        <dbReference type="ChEBI" id="CHEBI:18420"/>
    </ligand>
</feature>
<feature type="binding site" evidence="1">
    <location>
        <position position="289"/>
    </location>
    <ligand>
        <name>Mg(2+)</name>
        <dbReference type="ChEBI" id="CHEBI:18420"/>
    </ligand>
</feature>
<accession>B2GHT7</accession>
<sequence>MKNLQRPSGMPAHKYTPYHQNFPFDMSDRTWPDKVATTAPRWCAVDLRDGNQALIDPMDSERKLRMFQLLVGMGYKEIEVGFPSASQTDFDFVRTLVEGGHIPEDVSIQVLTQSREHLIERTYEAIDGAPNAIVHLYNSTSTLQRRVVFHQDMDGIVDIALTGARLCRKYEEQLSGTAVTYEYSPESYTGTELEFAARICNEVAETFEIGNGRKMIVNLPATVEMATPNVYADSIEWMGRHLYQREDIILSLHPHNDRGTGVAAAELGYLAGADRIEGCLFGNGERTGNVDLVTLGLNLLTQGVDPQIDFSDIEEIRRTVEYCNQLPVPERSPYGGDLVFTAFSGSHQDAIKKGFEAMERDAEQQGVGVDELEWAVPYLPIDPKDVGRSYEAVIRVNSQSGKGGVAYLLKSEYGIDLPRRAQIEFSGVVQKFTETSGSEVSAQQLWTIFRDEYLPSRDGSGSTWGHYRITSISTHAEDQANTVLEIGLDVGGEHKERTAQGTGPIDALINLFNREGMDVRLLDYTEHTLSASANAQAASYVELAVGDRVLWGAGMDSNTTRASLKAVISAVNRAVRDAQEAAQD</sequence>
<dbReference type="EC" id="2.3.3.13" evidence="1"/>
<dbReference type="EMBL" id="AP009152">
    <property type="protein sequence ID" value="BAG29640.1"/>
    <property type="molecule type" value="Genomic_DNA"/>
</dbReference>
<dbReference type="RefSeq" id="WP_012398361.1">
    <property type="nucleotide sequence ID" value="NC_010617.1"/>
</dbReference>
<dbReference type="SMR" id="B2GHT7"/>
<dbReference type="STRING" id="378753.KRH_12930"/>
<dbReference type="KEGG" id="krh:KRH_12930"/>
<dbReference type="eggNOG" id="COG0119">
    <property type="taxonomic scope" value="Bacteria"/>
</dbReference>
<dbReference type="HOGENOM" id="CLU_004588_3_1_11"/>
<dbReference type="OrthoDB" id="9803573at2"/>
<dbReference type="UniPathway" id="UPA00048">
    <property type="reaction ID" value="UER00070"/>
</dbReference>
<dbReference type="Proteomes" id="UP000008838">
    <property type="component" value="Chromosome"/>
</dbReference>
<dbReference type="GO" id="GO:0005737">
    <property type="term" value="C:cytoplasm"/>
    <property type="evidence" value="ECO:0007669"/>
    <property type="project" value="UniProtKB-SubCell"/>
</dbReference>
<dbReference type="GO" id="GO:0003852">
    <property type="term" value="F:2-isopropylmalate synthase activity"/>
    <property type="evidence" value="ECO:0007669"/>
    <property type="project" value="UniProtKB-UniRule"/>
</dbReference>
<dbReference type="GO" id="GO:0003985">
    <property type="term" value="F:acetyl-CoA C-acetyltransferase activity"/>
    <property type="evidence" value="ECO:0007669"/>
    <property type="project" value="UniProtKB-UniRule"/>
</dbReference>
<dbReference type="GO" id="GO:0000287">
    <property type="term" value="F:magnesium ion binding"/>
    <property type="evidence" value="ECO:0007669"/>
    <property type="project" value="UniProtKB-UniRule"/>
</dbReference>
<dbReference type="GO" id="GO:0009098">
    <property type="term" value="P:L-leucine biosynthetic process"/>
    <property type="evidence" value="ECO:0007669"/>
    <property type="project" value="UniProtKB-UniRule"/>
</dbReference>
<dbReference type="CDD" id="cd07942">
    <property type="entry name" value="DRE_TIM_LeuA"/>
    <property type="match status" value="1"/>
</dbReference>
<dbReference type="Gene3D" id="3.30.160.270">
    <property type="match status" value="1"/>
</dbReference>
<dbReference type="Gene3D" id="3.20.20.70">
    <property type="entry name" value="Aldolase class I"/>
    <property type="match status" value="1"/>
</dbReference>
<dbReference type="HAMAP" id="MF_00572">
    <property type="entry name" value="LeuA_type2"/>
    <property type="match status" value="1"/>
</dbReference>
<dbReference type="InterPro" id="IPR013709">
    <property type="entry name" value="2-isopropylmalate_synth_dimer"/>
</dbReference>
<dbReference type="InterPro" id="IPR002034">
    <property type="entry name" value="AIPM/Hcit_synth_CS"/>
</dbReference>
<dbReference type="InterPro" id="IPR013785">
    <property type="entry name" value="Aldolase_TIM"/>
</dbReference>
<dbReference type="InterPro" id="IPR005668">
    <property type="entry name" value="IPM_Synthase"/>
</dbReference>
<dbReference type="InterPro" id="IPR054692">
    <property type="entry name" value="LeuA-like_post-cat"/>
</dbReference>
<dbReference type="InterPro" id="IPR036230">
    <property type="entry name" value="LeuA_allosteric_dom_sf"/>
</dbReference>
<dbReference type="InterPro" id="IPR039371">
    <property type="entry name" value="LeuA_N_DRE-TIM"/>
</dbReference>
<dbReference type="InterPro" id="IPR000891">
    <property type="entry name" value="PYR_CT"/>
</dbReference>
<dbReference type="NCBIfam" id="TIGR00970">
    <property type="entry name" value="leuA_yeast"/>
    <property type="match status" value="1"/>
</dbReference>
<dbReference type="NCBIfam" id="NF002991">
    <property type="entry name" value="PRK03739.1"/>
    <property type="match status" value="1"/>
</dbReference>
<dbReference type="PANTHER" id="PTHR46911">
    <property type="match status" value="1"/>
</dbReference>
<dbReference type="PANTHER" id="PTHR46911:SF1">
    <property type="entry name" value="2-ISOPROPYLMALATE SYNTHASE"/>
    <property type="match status" value="1"/>
</dbReference>
<dbReference type="Pfam" id="PF00682">
    <property type="entry name" value="HMGL-like"/>
    <property type="match status" value="1"/>
</dbReference>
<dbReference type="Pfam" id="PF22615">
    <property type="entry name" value="IPMS_D2"/>
    <property type="match status" value="1"/>
</dbReference>
<dbReference type="Pfam" id="PF08502">
    <property type="entry name" value="LeuA_dimer"/>
    <property type="match status" value="1"/>
</dbReference>
<dbReference type="SMART" id="SM00917">
    <property type="entry name" value="LeuA_dimer"/>
    <property type="match status" value="1"/>
</dbReference>
<dbReference type="SUPFAM" id="SSF110921">
    <property type="entry name" value="2-isopropylmalate synthase LeuA, allosteric (dimerisation) domain"/>
    <property type="match status" value="1"/>
</dbReference>
<dbReference type="SUPFAM" id="SSF51569">
    <property type="entry name" value="Aldolase"/>
    <property type="match status" value="1"/>
</dbReference>
<dbReference type="SUPFAM" id="SSF89000">
    <property type="entry name" value="post-HMGL domain-like"/>
    <property type="match status" value="1"/>
</dbReference>
<dbReference type="PROSITE" id="PS00815">
    <property type="entry name" value="AIPM_HOMOCIT_SYNTH_1"/>
    <property type="match status" value="1"/>
</dbReference>
<dbReference type="PROSITE" id="PS00816">
    <property type="entry name" value="AIPM_HOMOCIT_SYNTH_2"/>
    <property type="match status" value="1"/>
</dbReference>
<dbReference type="PROSITE" id="PS50991">
    <property type="entry name" value="PYR_CT"/>
    <property type="match status" value="1"/>
</dbReference>
<proteinExistence type="inferred from homology"/>
<protein>
    <recommendedName>
        <fullName evidence="1">2-isopropylmalate synthase</fullName>
        <ecNumber evidence="1">2.3.3.13</ecNumber>
    </recommendedName>
    <alternativeName>
        <fullName evidence="1">Alpha-IPM synthase</fullName>
    </alternativeName>
    <alternativeName>
        <fullName evidence="1">Alpha-isopropylmalate synthase</fullName>
    </alternativeName>
</protein>
<comment type="function">
    <text evidence="1">Catalyzes the condensation of the acetyl group of acetyl-CoA with 3-methyl-2-oxobutanoate (2-ketoisovalerate) to form 3-carboxy-3-hydroxy-4-methylpentanoate (2-isopropylmalate).</text>
</comment>
<comment type="catalytic activity">
    <reaction evidence="1">
        <text>3-methyl-2-oxobutanoate + acetyl-CoA + H2O = (2S)-2-isopropylmalate + CoA + H(+)</text>
        <dbReference type="Rhea" id="RHEA:21524"/>
        <dbReference type="ChEBI" id="CHEBI:1178"/>
        <dbReference type="ChEBI" id="CHEBI:11851"/>
        <dbReference type="ChEBI" id="CHEBI:15377"/>
        <dbReference type="ChEBI" id="CHEBI:15378"/>
        <dbReference type="ChEBI" id="CHEBI:57287"/>
        <dbReference type="ChEBI" id="CHEBI:57288"/>
        <dbReference type="EC" id="2.3.3.13"/>
    </reaction>
</comment>
<comment type="cofactor">
    <cofactor evidence="1">
        <name>Mg(2+)</name>
        <dbReference type="ChEBI" id="CHEBI:18420"/>
    </cofactor>
</comment>
<comment type="pathway">
    <text evidence="1">Amino-acid biosynthesis; L-leucine biosynthesis; L-leucine from 3-methyl-2-oxobutanoate: step 1/4.</text>
</comment>
<comment type="subunit">
    <text evidence="1">Homodimer.</text>
</comment>
<comment type="subcellular location">
    <subcellularLocation>
        <location evidence="1">Cytoplasm</location>
    </subcellularLocation>
</comment>
<comment type="similarity">
    <text evidence="1">Belongs to the alpha-IPM synthase/homocitrate synthase family. LeuA type 2 subfamily.</text>
</comment>
<name>LEU1_KOCRD</name>
<organism>
    <name type="scientific">Kocuria rhizophila (strain ATCC 9341 / DSM 348 / NBRC 103217 / DC2201)</name>
    <dbReference type="NCBI Taxonomy" id="378753"/>
    <lineage>
        <taxon>Bacteria</taxon>
        <taxon>Bacillati</taxon>
        <taxon>Actinomycetota</taxon>
        <taxon>Actinomycetes</taxon>
        <taxon>Micrococcales</taxon>
        <taxon>Micrococcaceae</taxon>
        <taxon>Kocuria</taxon>
    </lineage>
</organism>
<evidence type="ECO:0000255" key="1">
    <source>
        <dbReference type="HAMAP-Rule" id="MF_00572"/>
    </source>
</evidence>
<keyword id="KW-0028">Amino-acid biosynthesis</keyword>
<keyword id="KW-0100">Branched-chain amino acid biosynthesis</keyword>
<keyword id="KW-0963">Cytoplasm</keyword>
<keyword id="KW-0432">Leucine biosynthesis</keyword>
<keyword id="KW-0460">Magnesium</keyword>
<keyword id="KW-0479">Metal-binding</keyword>
<keyword id="KW-1185">Reference proteome</keyword>
<keyword id="KW-0808">Transferase</keyword>
<gene>
    <name evidence="1" type="primary">leuA</name>
    <name type="ordered locus">KRH_12930</name>
</gene>
<reference key="1">
    <citation type="journal article" date="2008" name="J. Bacteriol.">
        <title>Complete genome sequence of the soil actinomycete Kocuria rhizophila.</title>
        <authorList>
            <person name="Takarada H."/>
            <person name="Sekine M."/>
            <person name="Kosugi H."/>
            <person name="Matsuo Y."/>
            <person name="Fujisawa T."/>
            <person name="Omata S."/>
            <person name="Kishi E."/>
            <person name="Shimizu A."/>
            <person name="Tsukatani N."/>
            <person name="Tanikawa S."/>
            <person name="Fujita N."/>
            <person name="Harayama S."/>
        </authorList>
    </citation>
    <scope>NUCLEOTIDE SEQUENCE [LARGE SCALE GENOMIC DNA]</scope>
    <source>
        <strain>ATCC 9341 / DSM 348 / NBRC 103217 / DC2201</strain>
    </source>
</reference>